<protein>
    <recommendedName>
        <fullName>Hemoglobin subunit beta-1</fullName>
    </recommendedName>
    <alternativeName>
        <fullName>Beta-1-globin</fullName>
    </alternativeName>
    <alternativeName>
        <fullName>Hemoglobin beta-1 chain</fullName>
    </alternativeName>
    <alternativeName>
        <fullName>Hemoglobin beta-major chain</fullName>
    </alternativeName>
</protein>
<keyword id="KW-0903">Direct protein sequencing</keyword>
<keyword id="KW-0349">Heme</keyword>
<keyword id="KW-0408">Iron</keyword>
<keyword id="KW-0479">Metal-binding</keyword>
<keyword id="KW-0561">Oxygen transport</keyword>
<keyword id="KW-0813">Transport</keyword>
<evidence type="ECO:0000255" key="1">
    <source>
        <dbReference type="PROSITE-ProRule" id="PRU00238"/>
    </source>
</evidence>
<comment type="function">
    <text>Involved in oxygen transport from the lung to the various peripheral tissues.</text>
</comment>
<comment type="subunit">
    <text>Major hemoglobin is a tetramer of two alpha-1 chains and two beta-1 chains.</text>
</comment>
<comment type="tissue specificity">
    <text>Red blood cells.</text>
</comment>
<comment type="similarity">
    <text evidence="1">Belongs to the globin family.</text>
</comment>
<gene>
    <name type="primary">HBB1</name>
</gene>
<feature type="chain" id="PRO_0000053138" description="Hemoglobin subunit beta-1">
    <location>
        <begin position="1"/>
        <end position="145"/>
    </location>
</feature>
<feature type="domain" description="Globin" evidence="1">
    <location>
        <begin position="1"/>
        <end position="145"/>
    </location>
</feature>
<feature type="binding site" description="distal binding residue">
    <location>
        <position position="62"/>
    </location>
    <ligand>
        <name>heme b</name>
        <dbReference type="ChEBI" id="CHEBI:60344"/>
    </ligand>
    <ligandPart>
        <name>Fe</name>
        <dbReference type="ChEBI" id="CHEBI:18248"/>
    </ligandPart>
</feature>
<feature type="binding site" description="proximal binding residue">
    <location>
        <position position="91"/>
    </location>
    <ligand>
        <name>heme b</name>
        <dbReference type="ChEBI" id="CHEBI:60344"/>
    </ligand>
    <ligandPart>
        <name>Fe</name>
        <dbReference type="ChEBI" id="CHEBI:18248"/>
    </ligandPart>
</feature>
<proteinExistence type="evidence at protein level"/>
<dbReference type="PIR" id="S02025">
    <property type="entry name" value="S02025"/>
</dbReference>
<dbReference type="SMR" id="P10785"/>
<dbReference type="GO" id="GO:0072562">
    <property type="term" value="C:blood microparticle"/>
    <property type="evidence" value="ECO:0007669"/>
    <property type="project" value="TreeGrafter"/>
</dbReference>
<dbReference type="GO" id="GO:0031838">
    <property type="term" value="C:haptoglobin-hemoglobin complex"/>
    <property type="evidence" value="ECO:0007669"/>
    <property type="project" value="TreeGrafter"/>
</dbReference>
<dbReference type="GO" id="GO:0005833">
    <property type="term" value="C:hemoglobin complex"/>
    <property type="evidence" value="ECO:0007669"/>
    <property type="project" value="InterPro"/>
</dbReference>
<dbReference type="GO" id="GO:0031720">
    <property type="term" value="F:haptoglobin binding"/>
    <property type="evidence" value="ECO:0007669"/>
    <property type="project" value="TreeGrafter"/>
</dbReference>
<dbReference type="GO" id="GO:0020037">
    <property type="term" value="F:heme binding"/>
    <property type="evidence" value="ECO:0007669"/>
    <property type="project" value="InterPro"/>
</dbReference>
<dbReference type="GO" id="GO:0046872">
    <property type="term" value="F:metal ion binding"/>
    <property type="evidence" value="ECO:0007669"/>
    <property type="project" value="UniProtKB-KW"/>
</dbReference>
<dbReference type="GO" id="GO:0043177">
    <property type="term" value="F:organic acid binding"/>
    <property type="evidence" value="ECO:0007669"/>
    <property type="project" value="TreeGrafter"/>
</dbReference>
<dbReference type="GO" id="GO:0019825">
    <property type="term" value="F:oxygen binding"/>
    <property type="evidence" value="ECO:0007669"/>
    <property type="project" value="InterPro"/>
</dbReference>
<dbReference type="GO" id="GO:0005344">
    <property type="term" value="F:oxygen carrier activity"/>
    <property type="evidence" value="ECO:0007669"/>
    <property type="project" value="UniProtKB-KW"/>
</dbReference>
<dbReference type="GO" id="GO:0004601">
    <property type="term" value="F:peroxidase activity"/>
    <property type="evidence" value="ECO:0007669"/>
    <property type="project" value="TreeGrafter"/>
</dbReference>
<dbReference type="GO" id="GO:0042744">
    <property type="term" value="P:hydrogen peroxide catabolic process"/>
    <property type="evidence" value="ECO:0007669"/>
    <property type="project" value="TreeGrafter"/>
</dbReference>
<dbReference type="CDD" id="cd08925">
    <property type="entry name" value="Hb-beta-like"/>
    <property type="match status" value="1"/>
</dbReference>
<dbReference type="Gene3D" id="1.10.490.10">
    <property type="entry name" value="Globins"/>
    <property type="match status" value="1"/>
</dbReference>
<dbReference type="InterPro" id="IPR000971">
    <property type="entry name" value="Globin"/>
</dbReference>
<dbReference type="InterPro" id="IPR009050">
    <property type="entry name" value="Globin-like_sf"/>
</dbReference>
<dbReference type="InterPro" id="IPR012292">
    <property type="entry name" value="Globin/Proto"/>
</dbReference>
<dbReference type="InterPro" id="IPR002337">
    <property type="entry name" value="Hemoglobin_b"/>
</dbReference>
<dbReference type="InterPro" id="IPR050056">
    <property type="entry name" value="Hemoglobin_oxygen_transport"/>
</dbReference>
<dbReference type="PANTHER" id="PTHR11442">
    <property type="entry name" value="HEMOGLOBIN FAMILY MEMBER"/>
    <property type="match status" value="1"/>
</dbReference>
<dbReference type="PANTHER" id="PTHR11442:SF100">
    <property type="entry name" value="HEMOGLOBIN SUBUNIT BETA-1"/>
    <property type="match status" value="1"/>
</dbReference>
<dbReference type="Pfam" id="PF00042">
    <property type="entry name" value="Globin"/>
    <property type="match status" value="1"/>
</dbReference>
<dbReference type="PRINTS" id="PR00814">
    <property type="entry name" value="BETAHAEM"/>
</dbReference>
<dbReference type="SUPFAM" id="SSF46458">
    <property type="entry name" value="Globin-like"/>
    <property type="match status" value="1"/>
</dbReference>
<dbReference type="PROSITE" id="PS01033">
    <property type="entry name" value="GLOBIN"/>
    <property type="match status" value="1"/>
</dbReference>
<sequence>TFTNDESQHIHDVCGKIPVDQVGAEALGRLILVNPWTRRYFKSFGDLSSAEAIQHNPKVASHGAKVMHSIAEAVKHLDDLKAYYADLSTIHCKKLYVDPANFKLFGGIVSIVTGMHLGTDYTAQKQAAFEKFLHHVEAALATGYH</sequence>
<name>HBB1_TRICR</name>
<reference key="1">
    <citation type="journal article" date="1988" name="Biol. Chem. Hoppe-Seyler">
        <title>The first sequenced normal hemoglobin lacking histidine in position 146 of the beta-chains. The primary structures of the major and minor hemoglobin components of the great crested newt (Triturus cristatus, Urodela, Amphibia).</title>
        <authorList>
            <person name="Kleinschmidt T."/>
            <person name="Sgouros J.G."/>
            <person name="Braunitzer G."/>
        </authorList>
    </citation>
    <scope>PROTEIN SEQUENCE</scope>
</reference>
<accession>P10785</accession>
<organism>
    <name type="scientific">Triturus cristatus</name>
    <name type="common">Great crested newt</name>
    <name type="synonym">Warty newt</name>
    <dbReference type="NCBI Taxonomy" id="8323"/>
    <lineage>
        <taxon>Eukaryota</taxon>
        <taxon>Metazoa</taxon>
        <taxon>Chordata</taxon>
        <taxon>Craniata</taxon>
        <taxon>Vertebrata</taxon>
        <taxon>Euteleostomi</taxon>
        <taxon>Amphibia</taxon>
        <taxon>Batrachia</taxon>
        <taxon>Caudata</taxon>
        <taxon>Salamandroidea</taxon>
        <taxon>Salamandridae</taxon>
        <taxon>Pleurodelinae</taxon>
        <taxon>Triturus</taxon>
    </lineage>
</organism>